<name>CODY_STRS7</name>
<organism>
    <name type="scientific">Streptococcus equi subsp. zooepidemicus (strain H70)</name>
    <dbReference type="NCBI Taxonomy" id="553483"/>
    <lineage>
        <taxon>Bacteria</taxon>
        <taxon>Bacillati</taxon>
        <taxon>Bacillota</taxon>
        <taxon>Bacilli</taxon>
        <taxon>Lactobacillales</taxon>
        <taxon>Streptococcaceae</taxon>
        <taxon>Streptococcus</taxon>
    </lineage>
</organism>
<dbReference type="EMBL" id="FM204884">
    <property type="protein sequence ID" value="CAX00314.1"/>
    <property type="molecule type" value="Genomic_DNA"/>
</dbReference>
<dbReference type="SMR" id="C0MEA0"/>
<dbReference type="KEGG" id="seq:SZO_15920"/>
<dbReference type="eggNOG" id="COG4465">
    <property type="taxonomic scope" value="Bacteria"/>
</dbReference>
<dbReference type="HOGENOM" id="CLU_089581_0_0_9"/>
<dbReference type="Proteomes" id="UP000001368">
    <property type="component" value="Chromosome"/>
</dbReference>
<dbReference type="GO" id="GO:0005737">
    <property type="term" value="C:cytoplasm"/>
    <property type="evidence" value="ECO:0007669"/>
    <property type="project" value="UniProtKB-SubCell"/>
</dbReference>
<dbReference type="GO" id="GO:0003677">
    <property type="term" value="F:DNA binding"/>
    <property type="evidence" value="ECO:0007669"/>
    <property type="project" value="UniProtKB-UniRule"/>
</dbReference>
<dbReference type="GO" id="GO:0003700">
    <property type="term" value="F:DNA-binding transcription factor activity"/>
    <property type="evidence" value="ECO:0007669"/>
    <property type="project" value="InterPro"/>
</dbReference>
<dbReference type="GO" id="GO:0005525">
    <property type="term" value="F:GTP binding"/>
    <property type="evidence" value="ECO:0007669"/>
    <property type="project" value="InterPro"/>
</dbReference>
<dbReference type="GO" id="GO:0045892">
    <property type="term" value="P:negative regulation of DNA-templated transcription"/>
    <property type="evidence" value="ECO:0007669"/>
    <property type="project" value="UniProtKB-UniRule"/>
</dbReference>
<dbReference type="CDD" id="cd00090">
    <property type="entry name" value="HTH_ARSR"/>
    <property type="match status" value="1"/>
</dbReference>
<dbReference type="FunFam" id="1.10.10.10:FF:000034">
    <property type="entry name" value="GTP-sensing transcriptional pleiotropic repressor CodY"/>
    <property type="match status" value="1"/>
</dbReference>
<dbReference type="FunFam" id="3.30.450.40:FF:000003">
    <property type="entry name" value="GTP-sensing transcriptional pleiotropic repressor CodY"/>
    <property type="match status" value="1"/>
</dbReference>
<dbReference type="Gene3D" id="3.30.450.40">
    <property type="match status" value="1"/>
</dbReference>
<dbReference type="Gene3D" id="1.10.10.10">
    <property type="entry name" value="Winged helix-like DNA-binding domain superfamily/Winged helix DNA-binding domain"/>
    <property type="match status" value="1"/>
</dbReference>
<dbReference type="HAMAP" id="MF_00621">
    <property type="entry name" value="HTH_type_CodY"/>
    <property type="match status" value="1"/>
</dbReference>
<dbReference type="InterPro" id="IPR011991">
    <property type="entry name" value="ArsR-like_HTH"/>
</dbReference>
<dbReference type="InterPro" id="IPR014154">
    <property type="entry name" value="CodY"/>
</dbReference>
<dbReference type="InterPro" id="IPR029016">
    <property type="entry name" value="GAF-like_dom_sf"/>
</dbReference>
<dbReference type="InterPro" id="IPR013198">
    <property type="entry name" value="GTP_trans_reg_CodY_C"/>
</dbReference>
<dbReference type="InterPro" id="IPR010312">
    <property type="entry name" value="Transc_reg_CodY_N"/>
</dbReference>
<dbReference type="InterPro" id="IPR036388">
    <property type="entry name" value="WH-like_DNA-bd_sf"/>
</dbReference>
<dbReference type="InterPro" id="IPR036390">
    <property type="entry name" value="WH_DNA-bd_sf"/>
</dbReference>
<dbReference type="NCBIfam" id="TIGR02787">
    <property type="entry name" value="codY_Gpos"/>
    <property type="match status" value="1"/>
</dbReference>
<dbReference type="NCBIfam" id="NF003170">
    <property type="entry name" value="PRK04158.1"/>
    <property type="match status" value="1"/>
</dbReference>
<dbReference type="PANTHER" id="PTHR40062:SF1">
    <property type="entry name" value="GLOBAL TRANSCRIPTIONAL REGULATOR CODY"/>
    <property type="match status" value="1"/>
</dbReference>
<dbReference type="PANTHER" id="PTHR40062">
    <property type="entry name" value="GTP-SENSING TRANSCRIPTIONAL PLEIOTROPIC REPRESSOR CODY"/>
    <property type="match status" value="1"/>
</dbReference>
<dbReference type="Pfam" id="PF06018">
    <property type="entry name" value="CodY"/>
    <property type="match status" value="1"/>
</dbReference>
<dbReference type="Pfam" id="PF08222">
    <property type="entry name" value="HTH_CodY"/>
    <property type="match status" value="1"/>
</dbReference>
<dbReference type="PIRSF" id="PIRSF011572">
    <property type="entry name" value="GTP_sensing_CodY"/>
    <property type="match status" value="1"/>
</dbReference>
<dbReference type="SUPFAM" id="SSF46785">
    <property type="entry name" value="Winged helix' DNA-binding domain"/>
    <property type="match status" value="1"/>
</dbReference>
<evidence type="ECO:0000255" key="1">
    <source>
        <dbReference type="HAMAP-Rule" id="MF_00621"/>
    </source>
</evidence>
<reference key="1">
    <citation type="journal article" date="2009" name="PLoS Pathog.">
        <title>Genomic evidence for the evolution of Streptococcus equi: host restriction, increased virulence, and genetic exchange with human pathogens.</title>
        <authorList>
            <person name="Holden M.T.G."/>
            <person name="Heather Z."/>
            <person name="Paillot R."/>
            <person name="Steward K.F."/>
            <person name="Webb K."/>
            <person name="Ainslie F."/>
            <person name="Jourdan T."/>
            <person name="Bason N.C."/>
            <person name="Holroyd N.E."/>
            <person name="Mungall K."/>
            <person name="Quail M.A."/>
            <person name="Sanders M."/>
            <person name="Simmonds M."/>
            <person name="Willey D."/>
            <person name="Brooks K."/>
            <person name="Aanensen D.M."/>
            <person name="Spratt B.G."/>
            <person name="Jolley K.A."/>
            <person name="Maiden M.C.J."/>
            <person name="Kehoe M."/>
            <person name="Chanter N."/>
            <person name="Bentley S.D."/>
            <person name="Robinson C."/>
            <person name="Maskell D.J."/>
            <person name="Parkhill J."/>
            <person name="Waller A.S."/>
        </authorList>
    </citation>
    <scope>NUCLEOTIDE SEQUENCE [LARGE SCALE GENOMIC DNA]</scope>
    <source>
        <strain>H70</strain>
    </source>
</reference>
<gene>
    <name evidence="1" type="primary">codY</name>
    <name type="ordered locus">SZO_15920</name>
</gene>
<accession>C0MEA0</accession>
<proteinExistence type="inferred from homology"/>
<protein>
    <recommendedName>
        <fullName evidence="1">Global transcriptional regulator CodY</fullName>
    </recommendedName>
</protein>
<keyword id="KW-0963">Cytoplasm</keyword>
<keyword id="KW-0238">DNA-binding</keyword>
<keyword id="KW-0678">Repressor</keyword>
<keyword id="KW-0804">Transcription</keyword>
<keyword id="KW-0805">Transcription regulation</keyword>
<sequence>MPNLLEKTRKITSILQRSVDSLETELPYNTMASRLADIIDCNACIINGGGSLLGYAMKYKTNTDRVEEFFETRQFPDAYVKAASRVYDTEANLSVENELTIFPVESKDIYPDGLTTIAPIYGGGMRLGTLIIWRNDNEFSDDDLVLVEISSTVVGIQLLNLQTENLEETIRKQTAVNMAINTLSYSEMKAVAAILSELDGNEGRLTASVIADRIGITRSVIVNALRKLESAGIIESRSLGMKGTYLKVINEGIFDKLKEF</sequence>
<comment type="function">
    <text evidence="1">DNA-binding global transcriptional regulator which is involved in the adaptive response to starvation and acts by directly or indirectly controlling the expression of numerous genes in response to nutrient availability. During rapid exponential growth, CodY is highly active and represses genes whose products allow adaptation to nutrient depletion.</text>
</comment>
<comment type="subcellular location">
    <subcellularLocation>
        <location evidence="1">Cytoplasm</location>
    </subcellularLocation>
</comment>
<comment type="similarity">
    <text evidence="1">Belongs to the CodY family.</text>
</comment>
<feature type="chain" id="PRO_1000212288" description="Global transcriptional regulator CodY">
    <location>
        <begin position="1"/>
        <end position="260"/>
    </location>
</feature>
<feature type="DNA-binding region" description="H-T-H motif" evidence="1">
    <location>
        <begin position="207"/>
        <end position="226"/>
    </location>
</feature>
<feature type="region of interest" description="GAF domain" evidence="1">
    <location>
        <begin position="1"/>
        <end position="159"/>
    </location>
</feature>